<organism>
    <name type="scientific">Bradyrhizobium sp. (strain BTAi1 / ATCC BAA-1182)</name>
    <dbReference type="NCBI Taxonomy" id="288000"/>
    <lineage>
        <taxon>Bacteria</taxon>
        <taxon>Pseudomonadati</taxon>
        <taxon>Pseudomonadota</taxon>
        <taxon>Alphaproteobacteria</taxon>
        <taxon>Hyphomicrobiales</taxon>
        <taxon>Nitrobacteraceae</taxon>
        <taxon>Bradyrhizobium</taxon>
    </lineage>
</organism>
<dbReference type="EC" id="6.2.1.5" evidence="1"/>
<dbReference type="EMBL" id="CP000494">
    <property type="protein sequence ID" value="ABQ32680.1"/>
    <property type="molecule type" value="Genomic_DNA"/>
</dbReference>
<dbReference type="RefSeq" id="WP_012040733.1">
    <property type="nucleotide sequence ID" value="NC_009485.1"/>
</dbReference>
<dbReference type="SMR" id="A5E936"/>
<dbReference type="STRING" id="288000.BBta_0393"/>
<dbReference type="KEGG" id="bbt:BBta_0393"/>
<dbReference type="eggNOG" id="COG0045">
    <property type="taxonomic scope" value="Bacteria"/>
</dbReference>
<dbReference type="HOGENOM" id="CLU_037430_0_2_5"/>
<dbReference type="OrthoDB" id="9802602at2"/>
<dbReference type="UniPathway" id="UPA00223">
    <property type="reaction ID" value="UER00999"/>
</dbReference>
<dbReference type="Proteomes" id="UP000000246">
    <property type="component" value="Chromosome"/>
</dbReference>
<dbReference type="GO" id="GO:0005829">
    <property type="term" value="C:cytosol"/>
    <property type="evidence" value="ECO:0007669"/>
    <property type="project" value="TreeGrafter"/>
</dbReference>
<dbReference type="GO" id="GO:0042709">
    <property type="term" value="C:succinate-CoA ligase complex"/>
    <property type="evidence" value="ECO:0007669"/>
    <property type="project" value="TreeGrafter"/>
</dbReference>
<dbReference type="GO" id="GO:0005524">
    <property type="term" value="F:ATP binding"/>
    <property type="evidence" value="ECO:0007669"/>
    <property type="project" value="UniProtKB-UniRule"/>
</dbReference>
<dbReference type="GO" id="GO:0000287">
    <property type="term" value="F:magnesium ion binding"/>
    <property type="evidence" value="ECO:0007669"/>
    <property type="project" value="UniProtKB-UniRule"/>
</dbReference>
<dbReference type="GO" id="GO:0004775">
    <property type="term" value="F:succinate-CoA ligase (ADP-forming) activity"/>
    <property type="evidence" value="ECO:0007669"/>
    <property type="project" value="UniProtKB-UniRule"/>
</dbReference>
<dbReference type="GO" id="GO:0004776">
    <property type="term" value="F:succinate-CoA ligase (GDP-forming) activity"/>
    <property type="evidence" value="ECO:0007669"/>
    <property type="project" value="RHEA"/>
</dbReference>
<dbReference type="GO" id="GO:0006104">
    <property type="term" value="P:succinyl-CoA metabolic process"/>
    <property type="evidence" value="ECO:0007669"/>
    <property type="project" value="TreeGrafter"/>
</dbReference>
<dbReference type="GO" id="GO:0006099">
    <property type="term" value="P:tricarboxylic acid cycle"/>
    <property type="evidence" value="ECO:0007669"/>
    <property type="project" value="UniProtKB-UniRule"/>
</dbReference>
<dbReference type="FunFam" id="3.30.1490.20:FF:000002">
    <property type="entry name" value="Succinate--CoA ligase [ADP-forming] subunit beta"/>
    <property type="match status" value="1"/>
</dbReference>
<dbReference type="FunFam" id="3.30.470.20:FF:000002">
    <property type="entry name" value="Succinate--CoA ligase [ADP-forming] subunit beta"/>
    <property type="match status" value="1"/>
</dbReference>
<dbReference type="FunFam" id="3.40.50.261:FF:000001">
    <property type="entry name" value="Succinate--CoA ligase [ADP-forming] subunit beta"/>
    <property type="match status" value="1"/>
</dbReference>
<dbReference type="Gene3D" id="3.30.1490.20">
    <property type="entry name" value="ATP-grasp fold, A domain"/>
    <property type="match status" value="1"/>
</dbReference>
<dbReference type="Gene3D" id="3.30.470.20">
    <property type="entry name" value="ATP-grasp fold, B domain"/>
    <property type="match status" value="1"/>
</dbReference>
<dbReference type="Gene3D" id="3.40.50.261">
    <property type="entry name" value="Succinyl-CoA synthetase domains"/>
    <property type="match status" value="1"/>
</dbReference>
<dbReference type="HAMAP" id="MF_00558">
    <property type="entry name" value="Succ_CoA_beta"/>
    <property type="match status" value="1"/>
</dbReference>
<dbReference type="InterPro" id="IPR011761">
    <property type="entry name" value="ATP-grasp"/>
</dbReference>
<dbReference type="InterPro" id="IPR013650">
    <property type="entry name" value="ATP-grasp_succ-CoA_synth-type"/>
</dbReference>
<dbReference type="InterPro" id="IPR013815">
    <property type="entry name" value="ATP_grasp_subdomain_1"/>
</dbReference>
<dbReference type="InterPro" id="IPR005811">
    <property type="entry name" value="SUCC_ACL_C"/>
</dbReference>
<dbReference type="InterPro" id="IPR005809">
    <property type="entry name" value="Succ_CoA_ligase-like_bsu"/>
</dbReference>
<dbReference type="InterPro" id="IPR016102">
    <property type="entry name" value="Succinyl-CoA_synth-like"/>
</dbReference>
<dbReference type="NCBIfam" id="NF001913">
    <property type="entry name" value="PRK00696.1"/>
    <property type="match status" value="1"/>
</dbReference>
<dbReference type="NCBIfam" id="TIGR01016">
    <property type="entry name" value="sucCoAbeta"/>
    <property type="match status" value="1"/>
</dbReference>
<dbReference type="PANTHER" id="PTHR11815:SF10">
    <property type="entry name" value="SUCCINATE--COA LIGASE [GDP-FORMING] SUBUNIT BETA, MITOCHONDRIAL"/>
    <property type="match status" value="1"/>
</dbReference>
<dbReference type="PANTHER" id="PTHR11815">
    <property type="entry name" value="SUCCINYL-COA SYNTHETASE BETA CHAIN"/>
    <property type="match status" value="1"/>
</dbReference>
<dbReference type="Pfam" id="PF08442">
    <property type="entry name" value="ATP-grasp_2"/>
    <property type="match status" value="1"/>
</dbReference>
<dbReference type="Pfam" id="PF00549">
    <property type="entry name" value="Ligase_CoA"/>
    <property type="match status" value="1"/>
</dbReference>
<dbReference type="PIRSF" id="PIRSF001554">
    <property type="entry name" value="SucCS_beta"/>
    <property type="match status" value="1"/>
</dbReference>
<dbReference type="SUPFAM" id="SSF56059">
    <property type="entry name" value="Glutathione synthetase ATP-binding domain-like"/>
    <property type="match status" value="1"/>
</dbReference>
<dbReference type="SUPFAM" id="SSF52210">
    <property type="entry name" value="Succinyl-CoA synthetase domains"/>
    <property type="match status" value="1"/>
</dbReference>
<dbReference type="PROSITE" id="PS50975">
    <property type="entry name" value="ATP_GRASP"/>
    <property type="match status" value="1"/>
</dbReference>
<keyword id="KW-0067">ATP-binding</keyword>
<keyword id="KW-0436">Ligase</keyword>
<keyword id="KW-0460">Magnesium</keyword>
<keyword id="KW-0479">Metal-binding</keyword>
<keyword id="KW-0547">Nucleotide-binding</keyword>
<keyword id="KW-1185">Reference proteome</keyword>
<keyword id="KW-0816">Tricarboxylic acid cycle</keyword>
<gene>
    <name evidence="1" type="primary">sucC</name>
    <name type="ordered locus">BBta_0393</name>
</gene>
<protein>
    <recommendedName>
        <fullName evidence="1">Succinate--CoA ligase [ADP-forming] subunit beta</fullName>
        <ecNumber evidence="1">6.2.1.5</ecNumber>
    </recommendedName>
    <alternativeName>
        <fullName evidence="1">Succinyl-CoA synthetase subunit beta</fullName>
        <shortName evidence="1">SCS-beta</shortName>
    </alternativeName>
</protein>
<reference key="1">
    <citation type="journal article" date="2007" name="Science">
        <title>Legumes symbioses: absence of nod genes in photosynthetic bradyrhizobia.</title>
        <authorList>
            <person name="Giraud E."/>
            <person name="Moulin L."/>
            <person name="Vallenet D."/>
            <person name="Barbe V."/>
            <person name="Cytryn E."/>
            <person name="Avarre J.-C."/>
            <person name="Jaubert M."/>
            <person name="Simon D."/>
            <person name="Cartieaux F."/>
            <person name="Prin Y."/>
            <person name="Bena G."/>
            <person name="Hannibal L."/>
            <person name="Fardoux J."/>
            <person name="Kojadinovic M."/>
            <person name="Vuillet L."/>
            <person name="Lajus A."/>
            <person name="Cruveiller S."/>
            <person name="Rouy Z."/>
            <person name="Mangenot S."/>
            <person name="Segurens B."/>
            <person name="Dossat C."/>
            <person name="Franck W.L."/>
            <person name="Chang W.-S."/>
            <person name="Saunders E."/>
            <person name="Bruce D."/>
            <person name="Richardson P."/>
            <person name="Normand P."/>
            <person name="Dreyfus B."/>
            <person name="Pignol D."/>
            <person name="Stacey G."/>
            <person name="Emerich D."/>
            <person name="Vermeglio A."/>
            <person name="Medigue C."/>
            <person name="Sadowsky M."/>
        </authorList>
    </citation>
    <scope>NUCLEOTIDE SEQUENCE [LARGE SCALE GENOMIC DNA]</scope>
    <source>
        <strain>BTAi1 / ATCC BAA-1182</strain>
    </source>
</reference>
<sequence>MNIHEYQAKALLHEFGVPISKGVPVLRPEDSDAAAKALGGPVWVVKSQIHAGGRGKGKFKEASAGDKGGVRLAKSIDEVNAFAKQMLGATLVTVQTGPDGKQVNRLYIEDGSDIDKEFYLSLLVDRETSKVAFVVSTEGGVNIEDVAHSTPEKIITFSVDPATGVMPHHGRAVAKALKLSGDLAKQAEKLTIQLYTAFVAKDMAMLEINPLVVTKQGQLRVLDAKVSFDSNALFKHPEVVALRDETEEDAKEIEASKYDLNYVALDGTIGCMVNGAGLAMATMDIIKLYGMEPANFLDVGGGASKEKVAAAFKIITADPNVKGILVNIFGGIMKCDVIAEGVVAAVKEVGLKVPLVVRLEGTNVDLGKKIISESGLNVLPADNLDDAAQKIVKAVKGG</sequence>
<proteinExistence type="inferred from homology"/>
<accession>A5E936</accession>
<comment type="function">
    <text evidence="1">Succinyl-CoA synthetase functions in the citric acid cycle (TCA), coupling the hydrolysis of succinyl-CoA to the synthesis of either ATP or GTP and thus represents the only step of substrate-level phosphorylation in the TCA. The beta subunit provides nucleotide specificity of the enzyme and binds the substrate succinate, while the binding sites for coenzyme A and phosphate are found in the alpha subunit.</text>
</comment>
<comment type="catalytic activity">
    <reaction evidence="1">
        <text>succinate + ATP + CoA = succinyl-CoA + ADP + phosphate</text>
        <dbReference type="Rhea" id="RHEA:17661"/>
        <dbReference type="ChEBI" id="CHEBI:30031"/>
        <dbReference type="ChEBI" id="CHEBI:30616"/>
        <dbReference type="ChEBI" id="CHEBI:43474"/>
        <dbReference type="ChEBI" id="CHEBI:57287"/>
        <dbReference type="ChEBI" id="CHEBI:57292"/>
        <dbReference type="ChEBI" id="CHEBI:456216"/>
        <dbReference type="EC" id="6.2.1.5"/>
    </reaction>
    <physiologicalReaction direction="right-to-left" evidence="1">
        <dbReference type="Rhea" id="RHEA:17663"/>
    </physiologicalReaction>
</comment>
<comment type="catalytic activity">
    <reaction evidence="1">
        <text>GTP + succinate + CoA = succinyl-CoA + GDP + phosphate</text>
        <dbReference type="Rhea" id="RHEA:22120"/>
        <dbReference type="ChEBI" id="CHEBI:30031"/>
        <dbReference type="ChEBI" id="CHEBI:37565"/>
        <dbReference type="ChEBI" id="CHEBI:43474"/>
        <dbReference type="ChEBI" id="CHEBI:57287"/>
        <dbReference type="ChEBI" id="CHEBI:57292"/>
        <dbReference type="ChEBI" id="CHEBI:58189"/>
    </reaction>
    <physiologicalReaction direction="right-to-left" evidence="1">
        <dbReference type="Rhea" id="RHEA:22122"/>
    </physiologicalReaction>
</comment>
<comment type="cofactor">
    <cofactor evidence="1">
        <name>Mg(2+)</name>
        <dbReference type="ChEBI" id="CHEBI:18420"/>
    </cofactor>
    <text evidence="1">Binds 1 Mg(2+) ion per subunit.</text>
</comment>
<comment type="pathway">
    <text evidence="1">Carbohydrate metabolism; tricarboxylic acid cycle; succinate from succinyl-CoA (ligase route): step 1/1.</text>
</comment>
<comment type="subunit">
    <text evidence="1">Heterotetramer of two alpha and two beta subunits.</text>
</comment>
<comment type="similarity">
    <text evidence="1">Belongs to the succinate/malate CoA ligase beta subunit family.</text>
</comment>
<feature type="chain" id="PRO_1000082029" description="Succinate--CoA ligase [ADP-forming] subunit beta">
    <location>
        <begin position="1"/>
        <end position="398"/>
    </location>
</feature>
<feature type="domain" description="ATP-grasp" evidence="1">
    <location>
        <begin position="9"/>
        <end position="254"/>
    </location>
</feature>
<feature type="binding site" evidence="1">
    <location>
        <position position="46"/>
    </location>
    <ligand>
        <name>ATP</name>
        <dbReference type="ChEBI" id="CHEBI:30616"/>
    </ligand>
</feature>
<feature type="binding site" evidence="1">
    <location>
        <begin position="53"/>
        <end position="55"/>
    </location>
    <ligand>
        <name>ATP</name>
        <dbReference type="ChEBI" id="CHEBI:30616"/>
    </ligand>
</feature>
<feature type="binding site" evidence="1">
    <location>
        <position position="109"/>
    </location>
    <ligand>
        <name>ATP</name>
        <dbReference type="ChEBI" id="CHEBI:30616"/>
    </ligand>
</feature>
<feature type="binding site" evidence="1">
    <location>
        <position position="112"/>
    </location>
    <ligand>
        <name>ATP</name>
        <dbReference type="ChEBI" id="CHEBI:30616"/>
    </ligand>
</feature>
<feature type="binding site" evidence="1">
    <location>
        <position position="117"/>
    </location>
    <ligand>
        <name>ATP</name>
        <dbReference type="ChEBI" id="CHEBI:30616"/>
    </ligand>
</feature>
<feature type="binding site" evidence="1">
    <location>
        <position position="209"/>
    </location>
    <ligand>
        <name>Mg(2+)</name>
        <dbReference type="ChEBI" id="CHEBI:18420"/>
    </ligand>
</feature>
<feature type="binding site" evidence="1">
    <location>
        <position position="223"/>
    </location>
    <ligand>
        <name>Mg(2+)</name>
        <dbReference type="ChEBI" id="CHEBI:18420"/>
    </ligand>
</feature>
<feature type="binding site" evidence="1">
    <location>
        <position position="274"/>
    </location>
    <ligand>
        <name>substrate</name>
        <note>ligand shared with subunit alpha</note>
    </ligand>
</feature>
<feature type="binding site" evidence="1">
    <location>
        <begin position="331"/>
        <end position="333"/>
    </location>
    <ligand>
        <name>substrate</name>
        <note>ligand shared with subunit alpha</note>
    </ligand>
</feature>
<name>SUCC_BRASB</name>
<evidence type="ECO:0000255" key="1">
    <source>
        <dbReference type="HAMAP-Rule" id="MF_00558"/>
    </source>
</evidence>